<feature type="chain" id="PRO_0000189397" description="Chlorosome protein J">
    <location>
        <begin position="1"/>
        <end position="225"/>
    </location>
</feature>
<feature type="domain" description="2Fe-2S ferredoxin-type" evidence="1">
    <location>
        <begin position="1"/>
        <end position="95"/>
    </location>
</feature>
<feature type="binding site" evidence="1">
    <location>
        <position position="33"/>
    </location>
    <ligand>
        <name>[2Fe-2S] cluster</name>
        <dbReference type="ChEBI" id="CHEBI:190135"/>
    </ligand>
</feature>
<feature type="binding site" evidence="1">
    <location>
        <position position="39"/>
    </location>
    <ligand>
        <name>[2Fe-2S] cluster</name>
        <dbReference type="ChEBI" id="CHEBI:190135"/>
    </ligand>
</feature>
<feature type="binding site" evidence="1">
    <location>
        <position position="42"/>
    </location>
    <ligand>
        <name>[2Fe-2S] cluster</name>
        <dbReference type="ChEBI" id="CHEBI:190135"/>
    </ligand>
</feature>
<feature type="binding site" evidence="1">
    <location>
        <position position="77"/>
    </location>
    <ligand>
        <name>[2Fe-2S] cluster</name>
        <dbReference type="ChEBI" id="CHEBI:190135"/>
    </ligand>
</feature>
<evidence type="ECO:0000255" key="1">
    <source>
        <dbReference type="PROSITE-ProRule" id="PRU00465"/>
    </source>
</evidence>
<gene>
    <name type="primary">csmJ</name>
    <name type="ordered locus">CT0651</name>
</gene>
<name>CSMJ_CHLTE</name>
<organism>
    <name type="scientific">Chlorobaculum tepidum (strain ATCC 49652 / DSM 12025 / NBRC 103806 / TLS)</name>
    <name type="common">Chlorobium tepidum</name>
    <dbReference type="NCBI Taxonomy" id="194439"/>
    <lineage>
        <taxon>Bacteria</taxon>
        <taxon>Pseudomonadati</taxon>
        <taxon>Chlorobiota</taxon>
        <taxon>Chlorobiia</taxon>
        <taxon>Chlorobiales</taxon>
        <taxon>Chlorobiaceae</taxon>
        <taxon>Chlorobaculum</taxon>
    </lineage>
</organism>
<proteinExistence type="predicted"/>
<dbReference type="EMBL" id="AF060077">
    <property type="protein sequence ID" value="AAC14870.1"/>
    <property type="molecule type" value="Genomic_DNA"/>
</dbReference>
<dbReference type="EMBL" id="AE006470">
    <property type="protein sequence ID" value="AAM71890.1"/>
    <property type="molecule type" value="Genomic_DNA"/>
</dbReference>
<dbReference type="RefSeq" id="NP_661548.1">
    <property type="nucleotide sequence ID" value="NC_002932.3"/>
</dbReference>
<dbReference type="RefSeq" id="WP_010932335.1">
    <property type="nucleotide sequence ID" value="NC_002932.3"/>
</dbReference>
<dbReference type="STRING" id="194439.CT0651"/>
<dbReference type="EnsemblBacteria" id="AAM71890">
    <property type="protein sequence ID" value="AAM71890"/>
    <property type="gene ID" value="CT0651"/>
</dbReference>
<dbReference type="KEGG" id="cte:CT0651"/>
<dbReference type="PATRIC" id="fig|194439.7.peg.606"/>
<dbReference type="eggNOG" id="COG0633">
    <property type="taxonomic scope" value="Bacteria"/>
</dbReference>
<dbReference type="HOGENOM" id="CLU_087598_0_0_10"/>
<dbReference type="OrthoDB" id="9799640at2"/>
<dbReference type="Proteomes" id="UP000001007">
    <property type="component" value="Chromosome"/>
</dbReference>
<dbReference type="GO" id="GO:0046858">
    <property type="term" value="C:chlorosome"/>
    <property type="evidence" value="ECO:0007669"/>
    <property type="project" value="UniProtKB-SubCell"/>
</dbReference>
<dbReference type="GO" id="GO:0051537">
    <property type="term" value="F:2 iron, 2 sulfur cluster binding"/>
    <property type="evidence" value="ECO:0007669"/>
    <property type="project" value="UniProtKB-KW"/>
</dbReference>
<dbReference type="GO" id="GO:0046872">
    <property type="term" value="F:metal ion binding"/>
    <property type="evidence" value="ECO:0007669"/>
    <property type="project" value="UniProtKB-KW"/>
</dbReference>
<dbReference type="GO" id="GO:0015979">
    <property type="term" value="P:photosynthesis"/>
    <property type="evidence" value="ECO:0007669"/>
    <property type="project" value="UniProtKB-KW"/>
</dbReference>
<dbReference type="Gene3D" id="3.10.20.30">
    <property type="match status" value="1"/>
</dbReference>
<dbReference type="InterPro" id="IPR036010">
    <property type="entry name" value="2Fe-2S_ferredoxin-like_sf"/>
</dbReference>
<dbReference type="InterPro" id="IPR001041">
    <property type="entry name" value="2Fe-2S_ferredoxin-type"/>
</dbReference>
<dbReference type="InterPro" id="IPR012675">
    <property type="entry name" value="Beta-grasp_dom_sf"/>
</dbReference>
<dbReference type="Pfam" id="PF00111">
    <property type="entry name" value="Fer2"/>
    <property type="match status" value="1"/>
</dbReference>
<dbReference type="SUPFAM" id="SSF54292">
    <property type="entry name" value="2Fe-2S ferredoxin-like"/>
    <property type="match status" value="1"/>
</dbReference>
<dbReference type="PROSITE" id="PS51085">
    <property type="entry name" value="2FE2S_FER_2"/>
    <property type="match status" value="1"/>
</dbReference>
<reference key="1">
    <citation type="journal article" date="2001" name="Biochemistry">
        <title>Electron transfer may occur in the chlorosome envelope: the CsmI and CsmJ proteins of chlorosomes are 2Fe-2S ferredoxins.</title>
        <authorList>
            <person name="Vassilieva E.V."/>
            <person name="Antonkine M.L."/>
            <person name="Zybailov B.L."/>
            <person name="Yang F."/>
            <person name="Jakobs C.U."/>
            <person name="Golbeck J.H."/>
            <person name="Bryant D.A."/>
        </authorList>
    </citation>
    <scope>NUCLEOTIDE SEQUENCE [GENOMIC DNA]</scope>
</reference>
<reference key="2">
    <citation type="journal article" date="2002" name="Proc. Natl. Acad. Sci. U.S.A.">
        <title>The complete genome sequence of Chlorobium tepidum TLS, a photosynthetic, anaerobic, green-sulfur bacterium.</title>
        <authorList>
            <person name="Eisen J.A."/>
            <person name="Nelson K.E."/>
            <person name="Paulsen I.T."/>
            <person name="Heidelberg J.F."/>
            <person name="Wu M."/>
            <person name="Dodson R.J."/>
            <person name="DeBoy R.T."/>
            <person name="Gwinn M.L."/>
            <person name="Nelson W.C."/>
            <person name="Haft D.H."/>
            <person name="Hickey E.K."/>
            <person name="Peterson J.D."/>
            <person name="Durkin A.S."/>
            <person name="Kolonay J.F."/>
            <person name="Yang F."/>
            <person name="Holt I.E."/>
            <person name="Umayam L.A."/>
            <person name="Mason T.M."/>
            <person name="Brenner M."/>
            <person name="Shea T.P."/>
            <person name="Parksey D.S."/>
            <person name="Nierman W.C."/>
            <person name="Feldblyum T.V."/>
            <person name="Hansen C.L."/>
            <person name="Craven M.B."/>
            <person name="Radune D."/>
            <person name="Vamathevan J.J."/>
            <person name="Khouri H.M."/>
            <person name="White O."/>
            <person name="Gruber T.M."/>
            <person name="Ketchum K.A."/>
            <person name="Venter J.C."/>
            <person name="Tettelin H."/>
            <person name="Bryant D.A."/>
            <person name="Fraser C.M."/>
        </authorList>
    </citation>
    <scope>NUCLEOTIDE SEQUENCE [LARGE SCALE GENOMIC DNA]</scope>
    <source>
        <strain>ATCC 49652 / DSM 12025 / NBRC 103806 / TLS</strain>
    </source>
</reference>
<protein>
    <recommendedName>
        <fullName>Chlorosome protein J</fullName>
    </recommendedName>
</protein>
<sequence>MIIYINDKPCNAKVGDLLLNTAKLNKAHIGYICGGNGICQSCFVYVLEGAECLSEPGEDEKAFISDKLFAEGGRLACRTTIVKEGTIRVLTRAEKFRRIVLGLNVPGFITYAQTIGYNVTNKLPSGVSSIVSRVQSGRLNPVDTIGKIASGLSPASQLVYNNFIEAFPFMQAPVNMVSGVAKSAIDNASGALCTISGGRLHLPGSTCTAHDKPAEAIERITISAK</sequence>
<accession>O68983</accession>
<comment type="function">
    <text>Could play a direct role in the oxidation or reduction of the quenching species formed in the chlorosome.</text>
</comment>
<comment type="cofactor">
    <cofactor>
        <name>[2Fe-2S] cluster</name>
        <dbReference type="ChEBI" id="CHEBI:190135"/>
    </cofactor>
    <text>Binds 1 [2Fe-2S] cluster per subunit.</text>
</comment>
<comment type="subcellular location">
    <subcellularLocation>
        <location>Chlorosome</location>
    </subcellularLocation>
</comment>
<keyword id="KW-0001">2Fe-2S</keyword>
<keyword id="KW-0151">Chlorosome</keyword>
<keyword id="KW-0249">Electron transport</keyword>
<keyword id="KW-0408">Iron</keyword>
<keyword id="KW-0411">Iron-sulfur</keyword>
<keyword id="KW-0479">Metal-binding</keyword>
<keyword id="KW-0602">Photosynthesis</keyword>
<keyword id="KW-1185">Reference proteome</keyword>
<keyword id="KW-0813">Transport</keyword>